<organism>
    <name type="scientific">Bubalus bubalis</name>
    <name type="common">Domestic water buffalo</name>
    <dbReference type="NCBI Taxonomy" id="89462"/>
    <lineage>
        <taxon>Eukaryota</taxon>
        <taxon>Metazoa</taxon>
        <taxon>Chordata</taxon>
        <taxon>Craniata</taxon>
        <taxon>Vertebrata</taxon>
        <taxon>Euteleostomi</taxon>
        <taxon>Mammalia</taxon>
        <taxon>Eutheria</taxon>
        <taxon>Laurasiatheria</taxon>
        <taxon>Artiodactyla</taxon>
        <taxon>Ruminantia</taxon>
        <taxon>Pecora</taxon>
        <taxon>Bovidae</taxon>
        <taxon>Bovinae</taxon>
        <taxon>Bubalus</taxon>
    </lineage>
</organism>
<comment type="function">
    <text evidence="3 4">Cooperates with LY96 to mediate the innate immune response to bacterial lipoproteins and other microbial cell wall components. Cooperates with TLR1 or TLR6 to mediate the innate immune response to bacterial lipoproteins or lipopeptides. Acts via MYD88 and TRAF6, leading to NF-kappa-B activation, cytokine secretion and the inflammatory response (By similarity). May also promote apoptosis in response to lipoproteins. Forms activation clusters composed of several receptors depending on the ligand, these clusters trigger signaling from the cell surface and subsequently are targeted to the Golgi in a lipid-raft dependent pathway. Forms the cluster TLR2:TLR6:CD14:CD36 in response to diacylated lipopeptides and TLR2:TLR1:CD14 in response to triacylated lipopeptides (By similarity).</text>
</comment>
<comment type="subunit">
    <text evidence="3 4">Interacts with LY96, TLR1 and TLR6 (via extracellular domain). TLR2 seems to exist in heterodimers with either TLR1 or TLR6 before stimulation by the ligand. The heterodimers form bigger oligomers in response to their corresponding ligands as well as further heterotypic associations with other receptors such as CD14 and/or CD36. Binds MYD88 (via TIR domain). Interacts with TICAM1. Interacts with CNPY3. Interacts with ATG16L1. Interacts with PPP1R11. Interacts with TICAM2. Interacts with TIRAP (By similarity).</text>
</comment>
<comment type="subcellular location">
    <subcellularLocation>
        <location evidence="4">Membrane</location>
        <topology evidence="5">Single-pass type I membrane protein</topology>
    </subcellularLocation>
    <subcellularLocation>
        <location evidence="4">Cytoplasmic vesicle</location>
        <location evidence="4">Phagosome membrane</location>
        <topology evidence="5">Single-pass type I membrane protein</topology>
    </subcellularLocation>
    <subcellularLocation>
        <location evidence="3">Membrane raft</location>
    </subcellularLocation>
    <text evidence="3">Does not reside in lipid rafts before stimulation but accumulates increasingly in the raft upon the presence of the microbial ligand. In response to diacylated lipoproteins, TLR2:TLR6 heterodimers are recruited in lipid rafts, this recruitment determine the intracellular targeting to the Golgi apparatus. Triacylated lipoproteins induce the same mechanism for TLR2:TLR1 heterodimers.</text>
</comment>
<comment type="domain">
    <text evidence="1">Ester-bound lipid substrates are bound through a crevice formed between the LRR 11 and LRR 12.</text>
</comment>
<comment type="domain">
    <text evidence="1">The ATG16L1-binding motif mediates interaction with ATG16L1.</text>
</comment>
<comment type="PTM">
    <text evidence="4">Ubiquitinated at Lys-754 by PPP1R11, leading to its degradation. Deubiquitinated by USP2.</text>
</comment>
<comment type="PTM">
    <text evidence="3">Glycosylation of Asn-442 is critical for secretion of the N-terminal ectodomain of TLR2.</text>
</comment>
<comment type="similarity">
    <text evidence="7">Belongs to the Toll-like receptor family.</text>
</comment>
<comment type="caution">
    <text evidence="2 7">In some plant proteins and in human SARM1, the TIR domain has NAD(+) hydrolase (NADase) activity (By similarity). However, despite the presence of the catalytic Asp residue, the isolated TIR domain of human TLR4 lacks NADase activity (By similarity). Based on this, it is unlikely that Toll-like receptors have NADase activity.</text>
</comment>
<evidence type="ECO:0000250" key="1"/>
<evidence type="ECO:0000250" key="2">
    <source>
        <dbReference type="UniProtKB" id="O00206"/>
    </source>
</evidence>
<evidence type="ECO:0000250" key="3">
    <source>
        <dbReference type="UniProtKB" id="O60603"/>
    </source>
</evidence>
<evidence type="ECO:0000250" key="4">
    <source>
        <dbReference type="UniProtKB" id="Q9QUN7"/>
    </source>
</evidence>
<evidence type="ECO:0000255" key="5"/>
<evidence type="ECO:0000255" key="6">
    <source>
        <dbReference type="PROSITE-ProRule" id="PRU00204"/>
    </source>
</evidence>
<evidence type="ECO:0000305" key="7"/>
<sequence length="784" mass="90195">MPRALWTAWVWAVIILSMEGASHQASSLSCDPTGVCDGHSRSLNSIPSGLTDGVKSLDLSNNEITYVSNRDLQRCVNLKTLRLGANEIHTVEEDSFFHLRNLEYLDLSYNRLSNLSSSWFRSLYALKFLNLLGNVYKTLGETSLFSHLPNLRTLKVGNSNSFTEIHEKDFTGLIFLEELEISAQNLQIYVPKSLKSIQNISHLILHLKQPVLLVDILVDIVSSLDCLELRDTNLHTFHFSEASISEMNTSVKKLIFRNVQFTDESFVEVVKLFNYVSGILEVEFDDCTHDGIGDFRALSLDRIRHLGNVETLTIRKLHIPQFFLFHDLSSIYPLTGKVKRVTIESSKVFLVPCLLSQHLKSLEYLDLSENLMSEETLKNSACKDAWPFLQTLVLRQNRLKSLEKTGELLLTLENLNNLDISKNNFLSMPETCRWPGKMKQLNLSSTRVHSLTQCLPQTLEILDVSNNNLDSFSLILPQLKELYISRNKLKTLPDASFLPVLSVMRISRNIINTFSKEQLDSFQQLKTLEAGGNNFICSCDFLSFTQGQQALGRVLVDWPAEYRCDSPSHVRGQRVQDARLSLSECHRAAVVSAACCALFLLLLLTGVLCHRFHGLWYMKMMWAWLQAKRKPRKAPRRDICYDAFVSYSEQDSYWVENLMVQELEHFNPPFKLCLHKRDFIPGKWIIDNIIDSIEKSHKTIFVLSENFVKSEWCKYELDFSHFRLFDENNDAAILILLEPIDKKAIPQRFCKLRKIMNTKTYLEWPVDETQQEGFWLNLRAAIRS</sequence>
<gene>
    <name type="primary">TLR2</name>
</gene>
<accession>Q2PZH4</accession>
<proteinExistence type="evidence at transcript level"/>
<dbReference type="EMBL" id="DQ288130">
    <property type="protein sequence ID" value="ABC00775.1"/>
    <property type="molecule type" value="mRNA"/>
</dbReference>
<dbReference type="EMBL" id="EU178742">
    <property type="protein sequence ID" value="ABW79911.1"/>
    <property type="molecule type" value="Genomic_DNA"/>
</dbReference>
<dbReference type="RefSeq" id="NP_001277820.1">
    <property type="nucleotide sequence ID" value="NM_001290891.1"/>
</dbReference>
<dbReference type="RefSeq" id="XP_006070178.1">
    <property type="nucleotide sequence ID" value="XM_006070116.1"/>
</dbReference>
<dbReference type="RefSeq" id="XP_006070179.1">
    <property type="nucleotide sequence ID" value="XM_006070117.1"/>
</dbReference>
<dbReference type="SMR" id="Q2PZH4"/>
<dbReference type="GlyCosmos" id="Q2PZH4">
    <property type="glycosylation" value="4 sites, No reported glycans"/>
</dbReference>
<dbReference type="GeneID" id="102397791"/>
<dbReference type="CTD" id="7097"/>
<dbReference type="OrthoDB" id="1081807at2759"/>
<dbReference type="GO" id="GO:0005794">
    <property type="term" value="C:Golgi apparatus"/>
    <property type="evidence" value="ECO:0000250"/>
    <property type="project" value="UniProtKB"/>
</dbReference>
<dbReference type="GO" id="GO:0045121">
    <property type="term" value="C:membrane raft"/>
    <property type="evidence" value="ECO:0000250"/>
    <property type="project" value="UniProtKB"/>
</dbReference>
<dbReference type="GO" id="GO:0030670">
    <property type="term" value="C:phagocytic vesicle membrane"/>
    <property type="evidence" value="ECO:0007669"/>
    <property type="project" value="UniProtKB-SubCell"/>
</dbReference>
<dbReference type="GO" id="GO:0005886">
    <property type="term" value="C:plasma membrane"/>
    <property type="evidence" value="ECO:0007669"/>
    <property type="project" value="TreeGrafter"/>
</dbReference>
<dbReference type="GO" id="GO:0043235">
    <property type="term" value="C:receptor complex"/>
    <property type="evidence" value="ECO:0007669"/>
    <property type="project" value="TreeGrafter"/>
</dbReference>
<dbReference type="GO" id="GO:0061809">
    <property type="term" value="F:NAD+ nucleosidase activity, cyclic ADP-ribose generating"/>
    <property type="evidence" value="ECO:0007669"/>
    <property type="project" value="UniProtKB-EC"/>
</dbReference>
<dbReference type="GO" id="GO:0004888">
    <property type="term" value="F:transmembrane signaling receptor activity"/>
    <property type="evidence" value="ECO:0007669"/>
    <property type="project" value="InterPro"/>
</dbReference>
<dbReference type="GO" id="GO:0042497">
    <property type="term" value="F:triacyl lipopeptide binding"/>
    <property type="evidence" value="ECO:0007669"/>
    <property type="project" value="TreeGrafter"/>
</dbReference>
<dbReference type="GO" id="GO:0071726">
    <property type="term" value="P:cellular response to diacyl bacterial lipopeptide"/>
    <property type="evidence" value="ECO:0000250"/>
    <property type="project" value="UniProtKB"/>
</dbReference>
<dbReference type="GO" id="GO:0071727">
    <property type="term" value="P:cellular response to triacyl bacterial lipopeptide"/>
    <property type="evidence" value="ECO:0000250"/>
    <property type="project" value="UniProtKB"/>
</dbReference>
<dbReference type="GO" id="GO:0006954">
    <property type="term" value="P:inflammatory response"/>
    <property type="evidence" value="ECO:0007669"/>
    <property type="project" value="UniProtKB-KW"/>
</dbReference>
<dbReference type="GO" id="GO:0045087">
    <property type="term" value="P:innate immune response"/>
    <property type="evidence" value="ECO:0007669"/>
    <property type="project" value="UniProtKB-KW"/>
</dbReference>
<dbReference type="GO" id="GO:0002224">
    <property type="term" value="P:toll-like receptor signaling pathway"/>
    <property type="evidence" value="ECO:0007669"/>
    <property type="project" value="InterPro"/>
</dbReference>
<dbReference type="FunFam" id="3.40.50.10140:FF:000001">
    <property type="entry name" value="Toll-like receptor 2"/>
    <property type="match status" value="1"/>
</dbReference>
<dbReference type="FunFam" id="3.80.10.10:FF:000046">
    <property type="entry name" value="Toll-like receptor 2"/>
    <property type="match status" value="1"/>
</dbReference>
<dbReference type="Gene3D" id="3.80.10.10">
    <property type="entry name" value="Ribonuclease Inhibitor"/>
    <property type="match status" value="1"/>
</dbReference>
<dbReference type="Gene3D" id="3.40.50.10140">
    <property type="entry name" value="Toll/interleukin-1 receptor homology (TIR) domain"/>
    <property type="match status" value="1"/>
</dbReference>
<dbReference type="InterPro" id="IPR000483">
    <property type="entry name" value="Cys-rich_flank_reg_C"/>
</dbReference>
<dbReference type="InterPro" id="IPR001611">
    <property type="entry name" value="Leu-rich_rpt"/>
</dbReference>
<dbReference type="InterPro" id="IPR003591">
    <property type="entry name" value="Leu-rich_rpt_typical-subtyp"/>
</dbReference>
<dbReference type="InterPro" id="IPR032675">
    <property type="entry name" value="LRR_dom_sf"/>
</dbReference>
<dbReference type="InterPro" id="IPR000157">
    <property type="entry name" value="TIR_dom"/>
</dbReference>
<dbReference type="InterPro" id="IPR017241">
    <property type="entry name" value="Toll-like_receptor"/>
</dbReference>
<dbReference type="InterPro" id="IPR035897">
    <property type="entry name" value="Toll_tir_struct_dom_sf"/>
</dbReference>
<dbReference type="PANTHER" id="PTHR24365">
    <property type="entry name" value="TOLL-LIKE RECEPTOR"/>
    <property type="match status" value="1"/>
</dbReference>
<dbReference type="PANTHER" id="PTHR24365:SF17">
    <property type="entry name" value="TOLL-LIKE RECEPTOR 2"/>
    <property type="match status" value="1"/>
</dbReference>
<dbReference type="Pfam" id="PF13855">
    <property type="entry name" value="LRR_8"/>
    <property type="match status" value="2"/>
</dbReference>
<dbReference type="Pfam" id="PF01582">
    <property type="entry name" value="TIR"/>
    <property type="match status" value="1"/>
</dbReference>
<dbReference type="PIRSF" id="PIRSF037595">
    <property type="entry name" value="Toll-like_receptor"/>
    <property type="match status" value="1"/>
</dbReference>
<dbReference type="PRINTS" id="PR01537">
    <property type="entry name" value="INTRLKN1R1F"/>
</dbReference>
<dbReference type="PRINTS" id="PR00019">
    <property type="entry name" value="LEURICHRPT"/>
</dbReference>
<dbReference type="SMART" id="SM00364">
    <property type="entry name" value="LRR_BAC"/>
    <property type="match status" value="5"/>
</dbReference>
<dbReference type="SMART" id="SM00365">
    <property type="entry name" value="LRR_SD22"/>
    <property type="match status" value="5"/>
</dbReference>
<dbReference type="SMART" id="SM00369">
    <property type="entry name" value="LRR_TYP"/>
    <property type="match status" value="6"/>
</dbReference>
<dbReference type="SMART" id="SM00082">
    <property type="entry name" value="LRRCT"/>
    <property type="match status" value="1"/>
</dbReference>
<dbReference type="SMART" id="SM00255">
    <property type="entry name" value="TIR"/>
    <property type="match status" value="1"/>
</dbReference>
<dbReference type="SUPFAM" id="SSF52058">
    <property type="entry name" value="L domain-like"/>
    <property type="match status" value="1"/>
</dbReference>
<dbReference type="SUPFAM" id="SSF52047">
    <property type="entry name" value="RNI-like"/>
    <property type="match status" value="1"/>
</dbReference>
<dbReference type="SUPFAM" id="SSF52200">
    <property type="entry name" value="Toll/Interleukin receptor TIR domain"/>
    <property type="match status" value="1"/>
</dbReference>
<dbReference type="PROSITE" id="PS51450">
    <property type="entry name" value="LRR"/>
    <property type="match status" value="9"/>
</dbReference>
<dbReference type="PROSITE" id="PS50104">
    <property type="entry name" value="TIR"/>
    <property type="match status" value="1"/>
</dbReference>
<feature type="signal peptide" evidence="5">
    <location>
        <begin position="1"/>
        <end position="20"/>
    </location>
</feature>
<feature type="chain" id="PRO_0000363769" description="Toll-like receptor 2">
    <location>
        <begin position="21"/>
        <end position="784"/>
    </location>
</feature>
<feature type="topological domain" description="Extracellular" evidence="5">
    <location>
        <begin position="21"/>
        <end position="587"/>
    </location>
</feature>
<feature type="transmembrane region" description="Helical" evidence="5">
    <location>
        <begin position="588"/>
        <end position="608"/>
    </location>
</feature>
<feature type="topological domain" description="Cytoplasmic" evidence="5">
    <location>
        <begin position="609"/>
        <end position="784"/>
    </location>
</feature>
<feature type="repeat" description="LRR 1">
    <location>
        <begin position="54"/>
        <end position="77"/>
    </location>
</feature>
<feature type="repeat" description="LRR 2">
    <location>
        <begin position="78"/>
        <end position="101"/>
    </location>
</feature>
<feature type="repeat" description="LRR 3">
    <location>
        <begin position="102"/>
        <end position="125"/>
    </location>
</feature>
<feature type="repeat" description="LRR 4">
    <location>
        <begin position="126"/>
        <end position="150"/>
    </location>
</feature>
<feature type="repeat" description="LRR 5">
    <location>
        <begin position="151"/>
        <end position="175"/>
    </location>
</feature>
<feature type="repeat" description="LRR 6">
    <location>
        <begin position="176"/>
        <end position="199"/>
    </location>
</feature>
<feature type="repeat" description="LRR 7">
    <location>
        <begin position="200"/>
        <end position="223"/>
    </location>
</feature>
<feature type="repeat" description="LRR 8">
    <location>
        <begin position="224"/>
        <end position="250"/>
    </location>
</feature>
<feature type="repeat" description="LRR 9">
    <location>
        <begin position="251"/>
        <end position="278"/>
    </location>
</feature>
<feature type="repeat" description="LRR 10">
    <location>
        <begin position="279"/>
        <end position="308"/>
    </location>
</feature>
<feature type="repeat" description="LRR 11">
    <location>
        <begin position="309"/>
        <end position="337"/>
    </location>
</feature>
<feature type="repeat" description="LRR 12">
    <location>
        <begin position="338"/>
        <end position="361"/>
    </location>
</feature>
<feature type="repeat" description="LRR 13">
    <location>
        <begin position="362"/>
        <end position="388"/>
    </location>
</feature>
<feature type="repeat" description="LRR 14">
    <location>
        <begin position="389"/>
        <end position="414"/>
    </location>
</feature>
<feature type="repeat" description="LRR 15">
    <location>
        <begin position="415"/>
        <end position="437"/>
    </location>
</feature>
<feature type="repeat" description="LRR 16">
    <location>
        <begin position="438"/>
        <end position="457"/>
    </location>
</feature>
<feature type="repeat" description="LRR 17">
    <location>
        <begin position="458"/>
        <end position="478"/>
    </location>
</feature>
<feature type="repeat" description="LRR 18">
    <location>
        <begin position="479"/>
        <end position="500"/>
    </location>
</feature>
<feature type="repeat" description="LRR 19">
    <location>
        <begin position="501"/>
        <end position="524"/>
    </location>
</feature>
<feature type="domain" description="LRRCT">
    <location>
        <begin position="525"/>
        <end position="579"/>
    </location>
</feature>
<feature type="domain" description="TIR" evidence="6">
    <location>
        <begin position="639"/>
        <end position="782"/>
    </location>
</feature>
<feature type="short sequence motif" description="ATG16L1-binding motif">
    <location>
        <begin position="761"/>
        <end position="778"/>
    </location>
</feature>
<feature type="site" description="Interaction with bacterial lipopeptide" evidence="1">
    <location>
        <position position="349"/>
    </location>
</feature>
<feature type="glycosylation site" description="N-linked (GlcNAc...) asparagine" evidence="5">
    <location>
        <position position="114"/>
    </location>
</feature>
<feature type="glycosylation site" description="N-linked (GlcNAc...) asparagine" evidence="5">
    <location>
        <position position="199"/>
    </location>
</feature>
<feature type="glycosylation site" description="N-linked (GlcNAc...) asparagine" evidence="5">
    <location>
        <position position="248"/>
    </location>
</feature>
<feature type="glycosylation site" description="N-linked (GlcNAc...) asparagine" evidence="5">
    <location>
        <position position="442"/>
    </location>
</feature>
<feature type="disulfide bond" evidence="1">
    <location>
        <begin position="30"/>
        <end position="36"/>
    </location>
</feature>
<feature type="disulfide bond" evidence="1">
    <location>
        <begin position="353"/>
        <end position="382"/>
    </location>
</feature>
<feature type="disulfide bond" evidence="1">
    <location>
        <begin position="432"/>
        <end position="454"/>
    </location>
</feature>
<feature type="cross-link" description="Glycyl lysine isopeptide (Lys-Gly) (interchain with G-Cter in ubiquitin)" evidence="3">
    <location>
        <position position="754"/>
    </location>
</feature>
<protein>
    <recommendedName>
        <fullName>Toll-like receptor 2</fullName>
    </recommendedName>
    <cdAntigenName>CD282</cdAntigenName>
</protein>
<keyword id="KW-0968">Cytoplasmic vesicle</keyword>
<keyword id="KW-1015">Disulfide bond</keyword>
<keyword id="KW-0325">Glycoprotein</keyword>
<keyword id="KW-0391">Immunity</keyword>
<keyword id="KW-0395">Inflammatory response</keyword>
<keyword id="KW-0399">Innate immunity</keyword>
<keyword id="KW-1017">Isopeptide bond</keyword>
<keyword id="KW-0433">Leucine-rich repeat</keyword>
<keyword id="KW-0472">Membrane</keyword>
<keyword id="KW-0520">NAD</keyword>
<keyword id="KW-0675">Receptor</keyword>
<keyword id="KW-0677">Repeat</keyword>
<keyword id="KW-0732">Signal</keyword>
<keyword id="KW-0812">Transmembrane</keyword>
<keyword id="KW-1133">Transmembrane helix</keyword>
<keyword id="KW-0832">Ubl conjugation</keyword>
<reference key="1">
    <citation type="submission" date="2005-11" db="EMBL/GenBank/DDBJ databases">
        <title>Full-length cDNA cloning of toll-like receptor 2 in Bubalus bubalis.</title>
        <authorList>
            <person name="Das D.K."/>
            <person name="Saini M."/>
            <person name="Swarup D."/>
            <person name="Sharma B."/>
            <person name="Yadav M.P."/>
            <person name="Gupta P.K."/>
        </authorList>
    </citation>
    <scope>NUCLEOTIDE SEQUENCE [MRNA]</scope>
</reference>
<reference key="2">
    <citation type="submission" date="2007-09" db="EMBL/GenBank/DDBJ databases">
        <authorList>
            <person name="Vijh R.K."/>
            <person name="Bharani Kumar S.T."/>
            <person name="Mishra B."/>
            <person name="Tantia M.S."/>
        </authorList>
    </citation>
    <scope>NUCLEOTIDE SEQUENCE [GENOMIC DNA]</scope>
</reference>
<name>TLR2_BUBBU</name>